<proteinExistence type="inferred from homology"/>
<accession>Q32D41</accession>
<sequence length="427" mass="46250">MTEAMKITLSTQPADARWGEKATYSINNDGIILHLNGADDLGLIQRAARKIDGLGIKHVQLSGESWDADRCWAFWQGYKAPKGTRKVEWPDLDDAQRQELDNRLMIIDWVRDTINAPAEELGPSQLAQRAVDLISNVAGDRVTYRITKGEDLREQGYMGLHTVGRGSERSPVLLALDYNPTGDKEAPVYACLVGKGITFDSGGYSIKQTAFMDSMKSDMGGAATVTGALAFAITRGLNKRVKLFLCCADNLISGNAFKLGDIITYRNGKKVEVMNTDAEGRLVLADGLIDASAQKPELIIDAATLTGAAKTALGNDYHALFSFDDALAGRLLASASQENEPFWRLPLAEFHRSQLPSNFAELNNTGSAAYPAGASTAAGFLSHFVENYQQGWLHIDCSATYRKAPVEQWSAGATGLGVRTIANLLTA</sequence>
<name>PEPB_SHIDS</name>
<organism>
    <name type="scientific">Shigella dysenteriae serotype 1 (strain Sd197)</name>
    <dbReference type="NCBI Taxonomy" id="300267"/>
    <lineage>
        <taxon>Bacteria</taxon>
        <taxon>Pseudomonadati</taxon>
        <taxon>Pseudomonadota</taxon>
        <taxon>Gammaproteobacteria</taxon>
        <taxon>Enterobacterales</taxon>
        <taxon>Enterobacteriaceae</taxon>
        <taxon>Shigella</taxon>
    </lineage>
</organism>
<reference key="1">
    <citation type="journal article" date="2005" name="Nucleic Acids Res.">
        <title>Genome dynamics and diversity of Shigella species, the etiologic agents of bacillary dysentery.</title>
        <authorList>
            <person name="Yang F."/>
            <person name="Yang J."/>
            <person name="Zhang X."/>
            <person name="Chen L."/>
            <person name="Jiang Y."/>
            <person name="Yan Y."/>
            <person name="Tang X."/>
            <person name="Wang J."/>
            <person name="Xiong Z."/>
            <person name="Dong J."/>
            <person name="Xue Y."/>
            <person name="Zhu Y."/>
            <person name="Xu X."/>
            <person name="Sun L."/>
            <person name="Chen S."/>
            <person name="Nie H."/>
            <person name="Peng J."/>
            <person name="Xu J."/>
            <person name="Wang Y."/>
            <person name="Yuan Z."/>
            <person name="Wen Y."/>
            <person name="Yao Z."/>
            <person name="Shen Y."/>
            <person name="Qiang B."/>
            <person name="Hou Y."/>
            <person name="Yu J."/>
            <person name="Jin Q."/>
        </authorList>
    </citation>
    <scope>NUCLEOTIDE SEQUENCE [LARGE SCALE GENOMIC DNA]</scope>
    <source>
        <strain>Sd197</strain>
    </source>
</reference>
<dbReference type="EC" id="3.4.11.23" evidence="1"/>
<dbReference type="EMBL" id="CP000034">
    <property type="protein sequence ID" value="ABB62764.1"/>
    <property type="status" value="ALT_INIT"/>
    <property type="molecule type" value="Genomic_DNA"/>
</dbReference>
<dbReference type="RefSeq" id="WP_000133554.1">
    <property type="nucleotide sequence ID" value="NC_007606.1"/>
</dbReference>
<dbReference type="RefSeq" id="YP_404255.2">
    <property type="nucleotide sequence ID" value="NC_007606.1"/>
</dbReference>
<dbReference type="SMR" id="Q32D41"/>
<dbReference type="STRING" id="300267.SDY_2719"/>
<dbReference type="MEROPS" id="M17.004"/>
<dbReference type="EnsemblBacteria" id="ABB62764">
    <property type="protein sequence ID" value="ABB62764"/>
    <property type="gene ID" value="SDY_2719"/>
</dbReference>
<dbReference type="KEGG" id="sdy:SDY_2719"/>
<dbReference type="PATRIC" id="fig|300267.13.peg.3280"/>
<dbReference type="HOGENOM" id="CLU_013734_7_1_6"/>
<dbReference type="Proteomes" id="UP000002716">
    <property type="component" value="Chromosome"/>
</dbReference>
<dbReference type="GO" id="GO:0005737">
    <property type="term" value="C:cytoplasm"/>
    <property type="evidence" value="ECO:0007669"/>
    <property type="project" value="UniProtKB-SubCell"/>
</dbReference>
<dbReference type="GO" id="GO:0030145">
    <property type="term" value="F:manganese ion binding"/>
    <property type="evidence" value="ECO:0007669"/>
    <property type="project" value="UniProtKB-UniRule"/>
</dbReference>
<dbReference type="GO" id="GO:0070006">
    <property type="term" value="F:metalloaminopeptidase activity"/>
    <property type="evidence" value="ECO:0007669"/>
    <property type="project" value="InterPro"/>
</dbReference>
<dbReference type="GO" id="GO:0006508">
    <property type="term" value="P:proteolysis"/>
    <property type="evidence" value="ECO:0007669"/>
    <property type="project" value="UniProtKB-UniRule"/>
</dbReference>
<dbReference type="CDD" id="cd00433">
    <property type="entry name" value="Peptidase_M17"/>
    <property type="match status" value="1"/>
</dbReference>
<dbReference type="FunFam" id="3.40.630.10:FF:000037">
    <property type="entry name" value="Peptidase B"/>
    <property type="match status" value="1"/>
</dbReference>
<dbReference type="Gene3D" id="3.40.630.10">
    <property type="entry name" value="Zn peptidases"/>
    <property type="match status" value="1"/>
</dbReference>
<dbReference type="HAMAP" id="MF_00504">
    <property type="entry name" value="Aminopeptidase_M17"/>
    <property type="match status" value="1"/>
</dbReference>
<dbReference type="InterPro" id="IPR011356">
    <property type="entry name" value="Leucine_aapep/pepB"/>
</dbReference>
<dbReference type="InterPro" id="IPR047620">
    <property type="entry name" value="M17_PepB-like_N"/>
</dbReference>
<dbReference type="InterPro" id="IPR008330">
    <property type="entry name" value="Pept_M17_PepB"/>
</dbReference>
<dbReference type="InterPro" id="IPR000819">
    <property type="entry name" value="Peptidase_M17_C"/>
</dbReference>
<dbReference type="NCBIfam" id="NF003450">
    <property type="entry name" value="PRK05015.1"/>
    <property type="match status" value="1"/>
</dbReference>
<dbReference type="PANTHER" id="PTHR11963">
    <property type="entry name" value="LEUCINE AMINOPEPTIDASE-RELATED"/>
    <property type="match status" value="1"/>
</dbReference>
<dbReference type="PANTHER" id="PTHR11963:SF20">
    <property type="entry name" value="PEPTIDASE B"/>
    <property type="match status" value="1"/>
</dbReference>
<dbReference type="Pfam" id="PF12404">
    <property type="entry name" value="DUF3663"/>
    <property type="match status" value="1"/>
</dbReference>
<dbReference type="Pfam" id="PF00883">
    <property type="entry name" value="Peptidase_M17"/>
    <property type="match status" value="1"/>
</dbReference>
<dbReference type="PIRSF" id="PIRSF036388">
    <property type="entry name" value="Ctsl_amnpptdse_B"/>
    <property type="match status" value="1"/>
</dbReference>
<dbReference type="PRINTS" id="PR00481">
    <property type="entry name" value="LAMNOPPTDASE"/>
</dbReference>
<dbReference type="SUPFAM" id="SSF53187">
    <property type="entry name" value="Zn-dependent exopeptidases"/>
    <property type="match status" value="1"/>
</dbReference>
<dbReference type="PROSITE" id="PS00631">
    <property type="entry name" value="CYTOSOL_AP"/>
    <property type="match status" value="1"/>
</dbReference>
<comment type="function">
    <text evidence="1">Probably plays an important role in intracellular peptide degradation.</text>
</comment>
<comment type="catalytic activity">
    <reaction evidence="1">
        <text>Release of an N-terminal amino acid, Xaa, from a peptide or arylamide. Xaa is preferably Glu or Asp but may be other amino acids, including Leu, Met, His, Cys and Gln.</text>
        <dbReference type="EC" id="3.4.11.23"/>
    </reaction>
</comment>
<comment type="cofactor">
    <cofactor evidence="1">
        <name>Mn(2+)</name>
        <dbReference type="ChEBI" id="CHEBI:29035"/>
    </cofactor>
    <text evidence="1">Binds 2 manganese ions per subunit.</text>
</comment>
<comment type="subunit">
    <text evidence="1">Homohexamer.</text>
</comment>
<comment type="subcellular location">
    <subcellularLocation>
        <location evidence="1">Cytoplasm</location>
    </subcellularLocation>
</comment>
<comment type="similarity">
    <text evidence="1">Belongs to the peptidase M17 family.</text>
</comment>
<comment type="sequence caution" evidence="2">
    <conflict type="erroneous initiation">
        <sequence resource="EMBL-CDS" id="ABB62764"/>
    </conflict>
</comment>
<feature type="chain" id="PRO_0000165844" description="Peptidase B">
    <location>
        <begin position="1"/>
        <end position="427"/>
    </location>
</feature>
<feature type="active site" evidence="1">
    <location>
        <position position="207"/>
    </location>
</feature>
<feature type="active site" evidence="1">
    <location>
        <position position="281"/>
    </location>
</feature>
<feature type="binding site" evidence="1">
    <location>
        <position position="195"/>
    </location>
    <ligand>
        <name>Mn(2+)</name>
        <dbReference type="ChEBI" id="CHEBI:29035"/>
        <label>2</label>
    </ligand>
</feature>
<feature type="binding site" evidence="1">
    <location>
        <position position="200"/>
    </location>
    <ligand>
        <name>Mn(2+)</name>
        <dbReference type="ChEBI" id="CHEBI:29035"/>
        <label>1</label>
    </ligand>
</feature>
<feature type="binding site" evidence="1">
    <location>
        <position position="200"/>
    </location>
    <ligand>
        <name>Mn(2+)</name>
        <dbReference type="ChEBI" id="CHEBI:29035"/>
        <label>2</label>
    </ligand>
</feature>
<feature type="binding site" evidence="1">
    <location>
        <position position="218"/>
    </location>
    <ligand>
        <name>Mn(2+)</name>
        <dbReference type="ChEBI" id="CHEBI:29035"/>
        <label>2</label>
    </ligand>
</feature>
<feature type="binding site" evidence="1">
    <location>
        <position position="277"/>
    </location>
    <ligand>
        <name>Mn(2+)</name>
        <dbReference type="ChEBI" id="CHEBI:29035"/>
        <label>1</label>
    </ligand>
</feature>
<feature type="binding site" evidence="1">
    <location>
        <position position="279"/>
    </location>
    <ligand>
        <name>Mn(2+)</name>
        <dbReference type="ChEBI" id="CHEBI:29035"/>
        <label>1</label>
    </ligand>
</feature>
<feature type="binding site" evidence="1">
    <location>
        <position position="279"/>
    </location>
    <ligand>
        <name>Mn(2+)</name>
        <dbReference type="ChEBI" id="CHEBI:29035"/>
        <label>2</label>
    </ligand>
</feature>
<evidence type="ECO:0000255" key="1">
    <source>
        <dbReference type="HAMAP-Rule" id="MF_00504"/>
    </source>
</evidence>
<evidence type="ECO:0000305" key="2"/>
<protein>
    <recommendedName>
        <fullName evidence="1">Peptidase B</fullName>
        <ecNumber evidence="1">3.4.11.23</ecNumber>
    </recommendedName>
    <alternativeName>
        <fullName evidence="1">Aminopeptidase B</fullName>
    </alternativeName>
</protein>
<keyword id="KW-0031">Aminopeptidase</keyword>
<keyword id="KW-0963">Cytoplasm</keyword>
<keyword id="KW-0378">Hydrolase</keyword>
<keyword id="KW-0464">Manganese</keyword>
<keyword id="KW-0479">Metal-binding</keyword>
<keyword id="KW-0645">Protease</keyword>
<keyword id="KW-1185">Reference proteome</keyword>
<gene>
    <name evidence="1" type="primary">pepB</name>
    <name type="ordered locus">SDY_2719</name>
</gene>